<accession>Q8NQK6</accession>
<comment type="function">
    <text evidence="1">GTPase that plays an essential role in the late steps of ribosome biogenesis.</text>
</comment>
<comment type="subunit">
    <text evidence="1">Associates with the 50S ribosomal subunit.</text>
</comment>
<comment type="similarity">
    <text evidence="1">Belongs to the TRAFAC class TrmE-Era-EngA-EngB-Septin-like GTPase superfamily. EngA (Der) GTPase family.</text>
</comment>
<comment type="sequence caution" evidence="3">
    <conflict type="erroneous initiation">
        <sequence resource="EMBL-CDS" id="CAF21438"/>
    </conflict>
    <text>Extended N-terminus.</text>
</comment>
<organism>
    <name type="scientific">Corynebacterium glutamicum (strain ATCC 13032 / DSM 20300 / JCM 1318 / BCRC 11384 / CCUG 27702 / LMG 3730 / NBRC 12168 / NCIMB 10025 / NRRL B-2784 / 534)</name>
    <dbReference type="NCBI Taxonomy" id="196627"/>
    <lineage>
        <taxon>Bacteria</taxon>
        <taxon>Bacillati</taxon>
        <taxon>Actinomycetota</taxon>
        <taxon>Actinomycetes</taxon>
        <taxon>Mycobacteriales</taxon>
        <taxon>Corynebacteriaceae</taxon>
        <taxon>Corynebacterium</taxon>
    </lineage>
</organism>
<evidence type="ECO:0000255" key="1">
    <source>
        <dbReference type="HAMAP-Rule" id="MF_00195"/>
    </source>
</evidence>
<evidence type="ECO:0000256" key="2">
    <source>
        <dbReference type="SAM" id="MobiDB-lite"/>
    </source>
</evidence>
<evidence type="ECO:0000305" key="3"/>
<feature type="chain" id="PRO_0000178988" description="GTPase Der">
    <location>
        <begin position="1"/>
        <end position="519"/>
    </location>
</feature>
<feature type="domain" description="EngA-type G 1">
    <location>
        <begin position="81"/>
        <end position="244"/>
    </location>
</feature>
<feature type="domain" description="EngA-type G 2">
    <location>
        <begin position="254"/>
        <end position="427"/>
    </location>
</feature>
<feature type="domain" description="KH-like" evidence="1">
    <location>
        <begin position="428"/>
        <end position="510"/>
    </location>
</feature>
<feature type="region of interest" description="Disordered" evidence="2">
    <location>
        <begin position="1"/>
        <end position="54"/>
    </location>
</feature>
<feature type="compositionally biased region" description="Acidic residues" evidence="2">
    <location>
        <begin position="1"/>
        <end position="12"/>
    </location>
</feature>
<feature type="compositionally biased region" description="Acidic residues" evidence="2">
    <location>
        <begin position="30"/>
        <end position="54"/>
    </location>
</feature>
<feature type="binding site" evidence="1">
    <location>
        <begin position="87"/>
        <end position="94"/>
    </location>
    <ligand>
        <name>GTP</name>
        <dbReference type="ChEBI" id="CHEBI:37565"/>
        <label>1</label>
    </ligand>
</feature>
<feature type="binding site" evidence="1">
    <location>
        <begin position="134"/>
        <end position="138"/>
    </location>
    <ligand>
        <name>GTP</name>
        <dbReference type="ChEBI" id="CHEBI:37565"/>
        <label>1</label>
    </ligand>
</feature>
<feature type="binding site" evidence="1">
    <location>
        <begin position="196"/>
        <end position="199"/>
    </location>
    <ligand>
        <name>GTP</name>
        <dbReference type="ChEBI" id="CHEBI:37565"/>
        <label>1</label>
    </ligand>
</feature>
<feature type="binding site" evidence="1">
    <location>
        <begin position="260"/>
        <end position="267"/>
    </location>
    <ligand>
        <name>GTP</name>
        <dbReference type="ChEBI" id="CHEBI:37565"/>
        <label>2</label>
    </ligand>
</feature>
<feature type="binding site" evidence="1">
    <location>
        <begin position="307"/>
        <end position="311"/>
    </location>
    <ligand>
        <name>GTP</name>
        <dbReference type="ChEBI" id="CHEBI:37565"/>
        <label>2</label>
    </ligand>
</feature>
<feature type="binding site" evidence="1">
    <location>
        <begin position="372"/>
        <end position="375"/>
    </location>
    <ligand>
        <name>GTP</name>
        <dbReference type="ChEBI" id="CHEBI:37565"/>
        <label>2</label>
    </ligand>
</feature>
<reference key="1">
    <citation type="journal article" date="2003" name="Appl. Microbiol. Biotechnol.">
        <title>The Corynebacterium glutamicum genome: features and impacts on biotechnological processes.</title>
        <authorList>
            <person name="Ikeda M."/>
            <person name="Nakagawa S."/>
        </authorList>
    </citation>
    <scope>NUCLEOTIDE SEQUENCE [LARGE SCALE GENOMIC DNA]</scope>
    <source>
        <strain>ATCC 13032 / DSM 20300 / JCM 1318 / BCRC 11384 / CCUG 27702 / LMG 3730 / NBRC 12168 / NCIMB 10025 / NRRL B-2784 / 534</strain>
    </source>
</reference>
<reference key="2">
    <citation type="journal article" date="2003" name="J. Biotechnol.">
        <title>The complete Corynebacterium glutamicum ATCC 13032 genome sequence and its impact on the production of L-aspartate-derived amino acids and vitamins.</title>
        <authorList>
            <person name="Kalinowski J."/>
            <person name="Bathe B."/>
            <person name="Bartels D."/>
            <person name="Bischoff N."/>
            <person name="Bott M."/>
            <person name="Burkovski A."/>
            <person name="Dusch N."/>
            <person name="Eggeling L."/>
            <person name="Eikmanns B.J."/>
            <person name="Gaigalat L."/>
            <person name="Goesmann A."/>
            <person name="Hartmann M."/>
            <person name="Huthmacher K."/>
            <person name="Kraemer R."/>
            <person name="Linke B."/>
            <person name="McHardy A.C."/>
            <person name="Meyer F."/>
            <person name="Moeckel B."/>
            <person name="Pfefferle W."/>
            <person name="Puehler A."/>
            <person name="Rey D.A."/>
            <person name="Rueckert C."/>
            <person name="Rupp O."/>
            <person name="Sahm H."/>
            <person name="Wendisch V.F."/>
            <person name="Wiegraebe I."/>
            <person name="Tauch A."/>
        </authorList>
    </citation>
    <scope>NUCLEOTIDE SEQUENCE [LARGE SCALE GENOMIC DNA]</scope>
    <source>
        <strain>ATCC 13032 / DSM 20300 / JCM 1318 / BCRC 11384 / CCUG 27702 / LMG 3730 / NBRC 12168 / NCIMB 10025 / NRRL B-2784 / 534</strain>
    </source>
</reference>
<gene>
    <name evidence="1" type="primary">der</name>
    <name type="synonym">engA</name>
    <name type="ordered locus">Cgl1428</name>
    <name type="ordered locus">cg1617</name>
</gene>
<keyword id="KW-0342">GTP-binding</keyword>
<keyword id="KW-0547">Nucleotide-binding</keyword>
<keyword id="KW-1185">Reference proteome</keyword>
<keyword id="KW-0677">Repeat</keyword>
<keyword id="KW-0690">Ribosome biogenesis</keyword>
<protein>
    <recommendedName>
        <fullName evidence="1">GTPase Der</fullName>
    </recommendedName>
    <alternativeName>
        <fullName evidence="1">GTP-binding protein EngA</fullName>
    </alternativeName>
</protein>
<sequence length="519" mass="57666">MDVEGAFADEEELAPHGGWASADFDPAEFGYEDSDDDFDAEDFDETEFSNPDFGEDYSDEDWEEIETAFGFDPSHLEEALCTVAIVGRPNVGKSTLVNRFIGRREAVVEDFPGVTRDRISYISDWGGHRFWVQDTGGWDPNVKGIHASIAQQAEVAMSTADVIVFVVDTKVGITETDSVMAAKLLRSEVPVILVANKFDSDSQWADMAEFYSLGLGDPYPVSAQHGRGGADVLDKVLELFPEEPRSKSIVEGPRRVALVGKPNVGKSSLLNKFAGETRSVVDNVAGTTVDPVDSLIQLDQKLWKFVDTAGLRKKVKTASGHEYYASLRTHGAIDAAELCVLLIDSSEPITEQDQRVLAMITDAGKALVIAFNKWDLMDEDRRIDLDRELDLQLAHVPWAKRINISAKTGRALQRLEPAMLEALDNWDRRISTGQLNTWLREAIAANPPPMRGGRLPRVLFATQASTQPPVIVLFTTGFLEAGYRRYLERKFRERFGFEGTPVRIAVRVRERRGKGGNKQ</sequence>
<name>DER_CORGL</name>
<dbReference type="EMBL" id="BA000036">
    <property type="protein sequence ID" value="BAB98821.1"/>
    <property type="molecule type" value="Genomic_DNA"/>
</dbReference>
<dbReference type="EMBL" id="BX927152">
    <property type="protein sequence ID" value="CAF21438.1"/>
    <property type="status" value="ALT_INIT"/>
    <property type="molecule type" value="Genomic_DNA"/>
</dbReference>
<dbReference type="RefSeq" id="NP_600646.1">
    <property type="nucleotide sequence ID" value="NC_003450.3"/>
</dbReference>
<dbReference type="SMR" id="Q8NQK6"/>
<dbReference type="STRING" id="196627.cg1617"/>
<dbReference type="KEGG" id="cgb:cg1617"/>
<dbReference type="KEGG" id="cgl:Cgl1428"/>
<dbReference type="PATRIC" id="fig|196627.13.peg.1396"/>
<dbReference type="eggNOG" id="COG1160">
    <property type="taxonomic scope" value="Bacteria"/>
</dbReference>
<dbReference type="HOGENOM" id="CLU_016077_6_2_11"/>
<dbReference type="OrthoDB" id="9805918at2"/>
<dbReference type="BioCyc" id="CORYNE:G18NG-11010-MONOMER"/>
<dbReference type="Proteomes" id="UP000000582">
    <property type="component" value="Chromosome"/>
</dbReference>
<dbReference type="Proteomes" id="UP000001009">
    <property type="component" value="Chromosome"/>
</dbReference>
<dbReference type="GO" id="GO:0005525">
    <property type="term" value="F:GTP binding"/>
    <property type="evidence" value="ECO:0007669"/>
    <property type="project" value="UniProtKB-UniRule"/>
</dbReference>
<dbReference type="GO" id="GO:0043022">
    <property type="term" value="F:ribosome binding"/>
    <property type="evidence" value="ECO:0007669"/>
    <property type="project" value="TreeGrafter"/>
</dbReference>
<dbReference type="GO" id="GO:0042254">
    <property type="term" value="P:ribosome biogenesis"/>
    <property type="evidence" value="ECO:0007669"/>
    <property type="project" value="UniProtKB-KW"/>
</dbReference>
<dbReference type="CDD" id="cd01894">
    <property type="entry name" value="EngA1"/>
    <property type="match status" value="1"/>
</dbReference>
<dbReference type="CDD" id="cd01895">
    <property type="entry name" value="EngA2"/>
    <property type="match status" value="1"/>
</dbReference>
<dbReference type="FunFam" id="3.30.300.20:FF:000004">
    <property type="entry name" value="GTPase Der"/>
    <property type="match status" value="1"/>
</dbReference>
<dbReference type="FunFam" id="3.40.50.300:FF:000057">
    <property type="entry name" value="GTPase Der"/>
    <property type="match status" value="1"/>
</dbReference>
<dbReference type="Gene3D" id="3.30.300.20">
    <property type="match status" value="1"/>
</dbReference>
<dbReference type="Gene3D" id="3.40.50.300">
    <property type="entry name" value="P-loop containing nucleotide triphosphate hydrolases"/>
    <property type="match status" value="2"/>
</dbReference>
<dbReference type="HAMAP" id="MF_00195">
    <property type="entry name" value="GTPase_Der"/>
    <property type="match status" value="1"/>
</dbReference>
<dbReference type="InterPro" id="IPR031166">
    <property type="entry name" value="G_ENGA"/>
</dbReference>
<dbReference type="InterPro" id="IPR006073">
    <property type="entry name" value="GTP-bd"/>
</dbReference>
<dbReference type="InterPro" id="IPR016484">
    <property type="entry name" value="GTPase_Der"/>
</dbReference>
<dbReference type="InterPro" id="IPR032859">
    <property type="entry name" value="KH_dom-like"/>
</dbReference>
<dbReference type="InterPro" id="IPR015946">
    <property type="entry name" value="KH_dom-like_a/b"/>
</dbReference>
<dbReference type="InterPro" id="IPR027417">
    <property type="entry name" value="P-loop_NTPase"/>
</dbReference>
<dbReference type="InterPro" id="IPR005225">
    <property type="entry name" value="Small_GTP-bd"/>
</dbReference>
<dbReference type="NCBIfam" id="TIGR03594">
    <property type="entry name" value="GTPase_EngA"/>
    <property type="match status" value="1"/>
</dbReference>
<dbReference type="NCBIfam" id="NF002828">
    <property type="entry name" value="PRK03003.1"/>
    <property type="match status" value="1"/>
</dbReference>
<dbReference type="NCBIfam" id="TIGR00231">
    <property type="entry name" value="small_GTP"/>
    <property type="match status" value="2"/>
</dbReference>
<dbReference type="PANTHER" id="PTHR43834">
    <property type="entry name" value="GTPASE DER"/>
    <property type="match status" value="1"/>
</dbReference>
<dbReference type="PANTHER" id="PTHR43834:SF6">
    <property type="entry name" value="GTPASE DER"/>
    <property type="match status" value="1"/>
</dbReference>
<dbReference type="Pfam" id="PF14714">
    <property type="entry name" value="KH_dom-like"/>
    <property type="match status" value="1"/>
</dbReference>
<dbReference type="Pfam" id="PF01926">
    <property type="entry name" value="MMR_HSR1"/>
    <property type="match status" value="2"/>
</dbReference>
<dbReference type="PIRSF" id="PIRSF006485">
    <property type="entry name" value="GTP-binding_EngA"/>
    <property type="match status" value="1"/>
</dbReference>
<dbReference type="PRINTS" id="PR00326">
    <property type="entry name" value="GTP1OBG"/>
</dbReference>
<dbReference type="SUPFAM" id="SSF52540">
    <property type="entry name" value="P-loop containing nucleoside triphosphate hydrolases"/>
    <property type="match status" value="2"/>
</dbReference>
<dbReference type="PROSITE" id="PS51712">
    <property type="entry name" value="G_ENGA"/>
    <property type="match status" value="2"/>
</dbReference>
<proteinExistence type="inferred from homology"/>